<reference key="1">
    <citation type="submission" date="2007-05" db="EMBL/GenBank/DDBJ databases">
        <title>Complete sequence of Pseudomonas putida F1.</title>
        <authorList>
            <consortium name="US DOE Joint Genome Institute"/>
            <person name="Copeland A."/>
            <person name="Lucas S."/>
            <person name="Lapidus A."/>
            <person name="Barry K."/>
            <person name="Detter J.C."/>
            <person name="Glavina del Rio T."/>
            <person name="Hammon N."/>
            <person name="Israni S."/>
            <person name="Dalin E."/>
            <person name="Tice H."/>
            <person name="Pitluck S."/>
            <person name="Chain P."/>
            <person name="Malfatti S."/>
            <person name="Shin M."/>
            <person name="Vergez L."/>
            <person name="Schmutz J."/>
            <person name="Larimer F."/>
            <person name="Land M."/>
            <person name="Hauser L."/>
            <person name="Kyrpides N."/>
            <person name="Lykidis A."/>
            <person name="Parales R."/>
            <person name="Richardson P."/>
        </authorList>
    </citation>
    <scope>NUCLEOTIDE SEQUENCE [LARGE SCALE GENOMIC DNA]</scope>
    <source>
        <strain>ATCC 700007 / DSM 6899 / JCM 31910 / BCRC 17059 / LMG 24140 / F1</strain>
    </source>
</reference>
<name>APAG_PSEP1</name>
<dbReference type="EMBL" id="CP000712">
    <property type="protein sequence ID" value="ABQ76604.1"/>
    <property type="molecule type" value="Genomic_DNA"/>
</dbReference>
<dbReference type="SMR" id="A5VXJ4"/>
<dbReference type="KEGG" id="ppf:Pput_0434"/>
<dbReference type="eggNOG" id="COG2967">
    <property type="taxonomic scope" value="Bacteria"/>
</dbReference>
<dbReference type="HOGENOM" id="CLU_128074_0_0_6"/>
<dbReference type="GO" id="GO:0070987">
    <property type="term" value="P:error-free translesion synthesis"/>
    <property type="evidence" value="ECO:0007669"/>
    <property type="project" value="TreeGrafter"/>
</dbReference>
<dbReference type="Gene3D" id="2.60.40.1470">
    <property type="entry name" value="ApaG domain"/>
    <property type="match status" value="1"/>
</dbReference>
<dbReference type="HAMAP" id="MF_00791">
    <property type="entry name" value="ApaG"/>
    <property type="match status" value="1"/>
</dbReference>
<dbReference type="InterPro" id="IPR007474">
    <property type="entry name" value="ApaG_domain"/>
</dbReference>
<dbReference type="InterPro" id="IPR036767">
    <property type="entry name" value="ApaG_sf"/>
</dbReference>
<dbReference type="InterPro" id="IPR023065">
    <property type="entry name" value="Uncharacterised_ApaG"/>
</dbReference>
<dbReference type="NCBIfam" id="NF003967">
    <property type="entry name" value="PRK05461.1"/>
    <property type="match status" value="1"/>
</dbReference>
<dbReference type="PANTHER" id="PTHR14289">
    <property type="entry name" value="F-BOX ONLY PROTEIN 3"/>
    <property type="match status" value="1"/>
</dbReference>
<dbReference type="PANTHER" id="PTHR14289:SF16">
    <property type="entry name" value="POLYMERASE DELTA-INTERACTING PROTEIN 2"/>
    <property type="match status" value="1"/>
</dbReference>
<dbReference type="Pfam" id="PF04379">
    <property type="entry name" value="DUF525"/>
    <property type="match status" value="1"/>
</dbReference>
<dbReference type="SUPFAM" id="SSF110069">
    <property type="entry name" value="ApaG-like"/>
    <property type="match status" value="1"/>
</dbReference>
<dbReference type="PROSITE" id="PS51087">
    <property type="entry name" value="APAG"/>
    <property type="match status" value="1"/>
</dbReference>
<feature type="chain" id="PRO_1000083636" description="Protein ApaG">
    <location>
        <begin position="1"/>
        <end position="126"/>
    </location>
</feature>
<feature type="domain" description="ApaG" evidence="1">
    <location>
        <begin position="2"/>
        <end position="126"/>
    </location>
</feature>
<organism>
    <name type="scientific">Pseudomonas putida (strain ATCC 700007 / DSM 6899 / JCM 31910 / BCRC 17059 / LMG 24140 / F1)</name>
    <dbReference type="NCBI Taxonomy" id="351746"/>
    <lineage>
        <taxon>Bacteria</taxon>
        <taxon>Pseudomonadati</taxon>
        <taxon>Pseudomonadota</taxon>
        <taxon>Gammaproteobacteria</taxon>
        <taxon>Pseudomonadales</taxon>
        <taxon>Pseudomonadaceae</taxon>
        <taxon>Pseudomonas</taxon>
    </lineage>
</organism>
<gene>
    <name evidence="1" type="primary">apaG</name>
    <name type="ordered locus">Pput_0434</name>
</gene>
<sequence length="126" mass="13792">MSDPRYQIDVSVVTRYLKEQSDPENSRFAFAYTITVQNNGSLSAKLLSRHWLITNGDGEVEEVRGAGVVGQQPNIDPGQSHTYSSGAVISTRVGTMQGSYQMFAEDGKRFDAEIAPFRLAVPGALH</sequence>
<evidence type="ECO:0000255" key="1">
    <source>
        <dbReference type="HAMAP-Rule" id="MF_00791"/>
    </source>
</evidence>
<accession>A5VXJ4</accession>
<proteinExistence type="inferred from homology"/>
<protein>
    <recommendedName>
        <fullName evidence="1">Protein ApaG</fullName>
    </recommendedName>
</protein>